<comment type="subcellular location">
    <subcellularLocation>
        <location evidence="1">Secreted</location>
    </subcellularLocation>
</comment>
<comment type="tissue specificity">
    <text>Expressed by the venom gland.</text>
</comment>
<comment type="PTM">
    <text evidence="1">Contains 4 disulfide bonds.</text>
</comment>
<comment type="similarity">
    <text evidence="3">Belongs to the neurotoxin 19 (CSTX) family. 08 (U8-Lctx) subfamily.</text>
</comment>
<keyword id="KW-1015">Disulfide bond</keyword>
<keyword id="KW-0964">Secreted</keyword>
<keyword id="KW-0732">Signal</keyword>
<keyword id="KW-0800">Toxin</keyword>
<reference key="1">
    <citation type="journal article" date="2010" name="Zoology">
        <title>Transcriptome analysis of the venom glands of the Chinese wolf spider Lycosa singoriensis.</title>
        <authorList>
            <person name="Zhang Y."/>
            <person name="Chen J."/>
            <person name="Tang X."/>
            <person name="Wang F."/>
            <person name="Jiang L."/>
            <person name="Xiong X."/>
            <person name="Wang M."/>
            <person name="Rong M."/>
            <person name="Liu Z."/>
            <person name="Liang S."/>
        </authorList>
    </citation>
    <scope>NUCLEOTIDE SEQUENCE [LARGE SCALE MRNA]</scope>
    <source>
        <tissue>Venom gland</tissue>
    </source>
</reference>
<feature type="signal peptide" evidence="2">
    <location>
        <begin position="1"/>
        <end position="20"/>
    </location>
</feature>
<feature type="propeptide" id="PRO_0000401789" evidence="1">
    <location>
        <begin position="21"/>
        <end position="26"/>
    </location>
</feature>
<feature type="chain" id="PRO_0000401790" description="U8-lycotoxin-Ls1e">
    <location>
        <begin position="27"/>
        <end position="77"/>
    </location>
</feature>
<proteinExistence type="evidence at transcript level"/>
<accession>B6DCY5</accession>
<protein>
    <recommendedName>
        <fullName>U8-lycotoxin-Ls1e</fullName>
    </recommendedName>
    <alternativeName>
        <fullName>Toxin-like structure LSTX-H14</fullName>
    </alternativeName>
</protein>
<evidence type="ECO:0000250" key="1"/>
<evidence type="ECO:0000255" key="2"/>
<evidence type="ECO:0000305" key="3"/>
<sequence>MKLIIFTGLVLFAIVSLIEAQAENEKPCLAQYQVCTHAPGNCCSNLVCDCYGRYKSGARIGRNCFCLQKGVIYKRED</sequence>
<name>TX814_LYCSI</name>
<dbReference type="EMBL" id="EU926069">
    <property type="protein sequence ID" value="ACI41401.1"/>
    <property type="molecule type" value="mRNA"/>
</dbReference>
<dbReference type="EMBL" id="FM864073">
    <property type="protein sequence ID" value="CAS03670.1"/>
    <property type="molecule type" value="mRNA"/>
</dbReference>
<dbReference type="SMR" id="B6DCY5"/>
<dbReference type="ArachnoServer" id="AS001008">
    <property type="toxin name" value="U8-lycotoxin-Ls1e"/>
</dbReference>
<dbReference type="GO" id="GO:0005576">
    <property type="term" value="C:extracellular region"/>
    <property type="evidence" value="ECO:0007669"/>
    <property type="project" value="UniProtKB-SubCell"/>
</dbReference>
<dbReference type="GO" id="GO:0090729">
    <property type="term" value="F:toxin activity"/>
    <property type="evidence" value="ECO:0007669"/>
    <property type="project" value="UniProtKB-KW"/>
</dbReference>
<dbReference type="InterPro" id="IPR019553">
    <property type="entry name" value="Spider_toxin_CSTX_knottin"/>
</dbReference>
<dbReference type="Pfam" id="PF10530">
    <property type="entry name" value="Toxin_35"/>
    <property type="match status" value="1"/>
</dbReference>
<organism>
    <name type="scientific">Lycosa singoriensis</name>
    <name type="common">Wolf spider</name>
    <name type="synonym">Aranea singoriensis</name>
    <dbReference type="NCBI Taxonomy" id="434756"/>
    <lineage>
        <taxon>Eukaryota</taxon>
        <taxon>Metazoa</taxon>
        <taxon>Ecdysozoa</taxon>
        <taxon>Arthropoda</taxon>
        <taxon>Chelicerata</taxon>
        <taxon>Arachnida</taxon>
        <taxon>Araneae</taxon>
        <taxon>Araneomorphae</taxon>
        <taxon>Entelegynae</taxon>
        <taxon>Lycosoidea</taxon>
        <taxon>Lycosidae</taxon>
        <taxon>Lycosa</taxon>
    </lineage>
</organism>